<feature type="chain" id="PRO_1000166408" description="Small ribosomal subunit protein uS15">
    <location>
        <begin position="1"/>
        <end position="90"/>
    </location>
</feature>
<comment type="function">
    <text evidence="1">One of the primary rRNA binding proteins, it binds directly to 16S rRNA where it helps nucleate assembly of the platform of the 30S subunit by binding and bridging several RNA helices of the 16S rRNA.</text>
</comment>
<comment type="function">
    <text evidence="1">Forms an intersubunit bridge (bridge B4) with the 23S rRNA of the 50S subunit in the ribosome.</text>
</comment>
<comment type="subunit">
    <text evidence="1">Part of the 30S ribosomal subunit. Forms a bridge to the 50S subunit in the 70S ribosome, contacting the 23S rRNA.</text>
</comment>
<comment type="similarity">
    <text evidence="1">Belongs to the universal ribosomal protein uS15 family.</text>
</comment>
<keyword id="KW-1185">Reference proteome</keyword>
<keyword id="KW-0687">Ribonucleoprotein</keyword>
<keyword id="KW-0689">Ribosomal protein</keyword>
<keyword id="KW-0694">RNA-binding</keyword>
<keyword id="KW-0699">rRNA-binding</keyword>
<proteinExistence type="inferred from homology"/>
<protein>
    <recommendedName>
        <fullName evidence="1">Small ribosomal subunit protein uS15</fullName>
    </recommendedName>
    <alternativeName>
        <fullName evidence="2">30S ribosomal protein S15</fullName>
    </alternativeName>
</protein>
<accession>B9KCH8</accession>
<sequence>MALDSAKKAEIVAKFARKEGDTGSPEVQIALLSARISDLTEHLKIYKKDFSSRLGLLKLVGQRKRLLSYLKRKDYQAYSKLISELNLRDK</sequence>
<reference key="1">
    <citation type="journal article" date="2008" name="Foodborne Pathog. Dis.">
        <title>The complete genome sequence and analysis of the human pathogen Campylobacter lari.</title>
        <authorList>
            <person name="Miller W.G."/>
            <person name="Wang G."/>
            <person name="Binnewies T.T."/>
            <person name="Parker C.T."/>
        </authorList>
    </citation>
    <scope>NUCLEOTIDE SEQUENCE [LARGE SCALE GENOMIC DNA]</scope>
    <source>
        <strain>RM2100 / D67 / ATCC BAA-1060</strain>
    </source>
</reference>
<evidence type="ECO:0000255" key="1">
    <source>
        <dbReference type="HAMAP-Rule" id="MF_01343"/>
    </source>
</evidence>
<evidence type="ECO:0000305" key="2"/>
<organism>
    <name type="scientific">Campylobacter lari (strain RM2100 / D67 / ATCC BAA-1060)</name>
    <dbReference type="NCBI Taxonomy" id="306263"/>
    <lineage>
        <taxon>Bacteria</taxon>
        <taxon>Pseudomonadati</taxon>
        <taxon>Campylobacterota</taxon>
        <taxon>Epsilonproteobacteria</taxon>
        <taxon>Campylobacterales</taxon>
        <taxon>Campylobacteraceae</taxon>
        <taxon>Campylobacter</taxon>
    </lineage>
</organism>
<gene>
    <name evidence="1" type="primary">rpsO</name>
    <name type="ordered locus">Cla_0943</name>
</gene>
<dbReference type="EMBL" id="CP000932">
    <property type="protein sequence ID" value="ACM64267.1"/>
    <property type="molecule type" value="Genomic_DNA"/>
</dbReference>
<dbReference type="RefSeq" id="WP_012661650.1">
    <property type="nucleotide sequence ID" value="NC_012039.1"/>
</dbReference>
<dbReference type="SMR" id="B9KCH8"/>
<dbReference type="STRING" id="306263.Cla_0943"/>
<dbReference type="GeneID" id="93004983"/>
<dbReference type="KEGG" id="cla:CLA_0943"/>
<dbReference type="eggNOG" id="COG0184">
    <property type="taxonomic scope" value="Bacteria"/>
</dbReference>
<dbReference type="HOGENOM" id="CLU_148518_0_0_7"/>
<dbReference type="Proteomes" id="UP000007727">
    <property type="component" value="Chromosome"/>
</dbReference>
<dbReference type="GO" id="GO:0022627">
    <property type="term" value="C:cytosolic small ribosomal subunit"/>
    <property type="evidence" value="ECO:0007669"/>
    <property type="project" value="TreeGrafter"/>
</dbReference>
<dbReference type="GO" id="GO:0019843">
    <property type="term" value="F:rRNA binding"/>
    <property type="evidence" value="ECO:0007669"/>
    <property type="project" value="UniProtKB-UniRule"/>
</dbReference>
<dbReference type="GO" id="GO:0003735">
    <property type="term" value="F:structural constituent of ribosome"/>
    <property type="evidence" value="ECO:0007669"/>
    <property type="project" value="InterPro"/>
</dbReference>
<dbReference type="GO" id="GO:0006412">
    <property type="term" value="P:translation"/>
    <property type="evidence" value="ECO:0007669"/>
    <property type="project" value="UniProtKB-UniRule"/>
</dbReference>
<dbReference type="CDD" id="cd00353">
    <property type="entry name" value="Ribosomal_S15p_S13e"/>
    <property type="match status" value="1"/>
</dbReference>
<dbReference type="FunFam" id="1.10.287.10:FF:000002">
    <property type="entry name" value="30S ribosomal protein S15"/>
    <property type="match status" value="1"/>
</dbReference>
<dbReference type="Gene3D" id="6.10.250.3130">
    <property type="match status" value="1"/>
</dbReference>
<dbReference type="Gene3D" id="1.10.287.10">
    <property type="entry name" value="S15/NS1, RNA-binding"/>
    <property type="match status" value="1"/>
</dbReference>
<dbReference type="HAMAP" id="MF_01343_B">
    <property type="entry name" value="Ribosomal_uS15_B"/>
    <property type="match status" value="1"/>
</dbReference>
<dbReference type="InterPro" id="IPR000589">
    <property type="entry name" value="Ribosomal_uS15"/>
</dbReference>
<dbReference type="InterPro" id="IPR005290">
    <property type="entry name" value="Ribosomal_uS15_bac-type"/>
</dbReference>
<dbReference type="InterPro" id="IPR009068">
    <property type="entry name" value="uS15_NS1_RNA-bd_sf"/>
</dbReference>
<dbReference type="NCBIfam" id="TIGR00952">
    <property type="entry name" value="S15_bact"/>
    <property type="match status" value="1"/>
</dbReference>
<dbReference type="PANTHER" id="PTHR23321">
    <property type="entry name" value="RIBOSOMAL PROTEIN S15, BACTERIAL AND ORGANELLAR"/>
    <property type="match status" value="1"/>
</dbReference>
<dbReference type="PANTHER" id="PTHR23321:SF26">
    <property type="entry name" value="SMALL RIBOSOMAL SUBUNIT PROTEIN US15M"/>
    <property type="match status" value="1"/>
</dbReference>
<dbReference type="Pfam" id="PF00312">
    <property type="entry name" value="Ribosomal_S15"/>
    <property type="match status" value="1"/>
</dbReference>
<dbReference type="SMART" id="SM01387">
    <property type="entry name" value="Ribosomal_S15"/>
    <property type="match status" value="1"/>
</dbReference>
<dbReference type="SUPFAM" id="SSF47060">
    <property type="entry name" value="S15/NS1 RNA-binding domain"/>
    <property type="match status" value="1"/>
</dbReference>
<dbReference type="PROSITE" id="PS00362">
    <property type="entry name" value="RIBOSOMAL_S15"/>
    <property type="match status" value="1"/>
</dbReference>
<name>RS15_CAMLR</name>